<organism>
    <name type="scientific">Methanosarcina mazei (strain ATCC BAA-159 / DSM 3647 / Goe1 / Go1 / JCM 11833 / OCM 88)</name>
    <name type="common">Methanosarcina frisia</name>
    <dbReference type="NCBI Taxonomy" id="192952"/>
    <lineage>
        <taxon>Archaea</taxon>
        <taxon>Methanobacteriati</taxon>
        <taxon>Methanobacteriota</taxon>
        <taxon>Stenosarchaea group</taxon>
        <taxon>Methanomicrobia</taxon>
        <taxon>Methanosarcinales</taxon>
        <taxon>Methanosarcinaceae</taxon>
        <taxon>Methanosarcina</taxon>
    </lineage>
</organism>
<proteinExistence type="inferred from homology"/>
<evidence type="ECO:0000255" key="1">
    <source>
        <dbReference type="HAMAP-Rule" id="MF_00099"/>
    </source>
</evidence>
<dbReference type="EC" id="3.1.1.61" evidence="1"/>
<dbReference type="EC" id="3.5.1.44" evidence="1"/>
<dbReference type="EMBL" id="AE008384">
    <property type="protein sequence ID" value="AAM31022.1"/>
    <property type="molecule type" value="Genomic_DNA"/>
</dbReference>
<dbReference type="SMR" id="Q8PX96"/>
<dbReference type="KEGG" id="mma:MM_1326"/>
<dbReference type="PATRIC" id="fig|192952.21.peg.1540"/>
<dbReference type="eggNOG" id="arCOG02382">
    <property type="taxonomic scope" value="Archaea"/>
</dbReference>
<dbReference type="HOGENOM" id="CLU_000445_51_0_2"/>
<dbReference type="Proteomes" id="UP000000595">
    <property type="component" value="Chromosome"/>
</dbReference>
<dbReference type="GO" id="GO:0005737">
    <property type="term" value="C:cytoplasm"/>
    <property type="evidence" value="ECO:0007669"/>
    <property type="project" value="UniProtKB-SubCell"/>
</dbReference>
<dbReference type="GO" id="GO:0000156">
    <property type="term" value="F:phosphorelay response regulator activity"/>
    <property type="evidence" value="ECO:0007669"/>
    <property type="project" value="InterPro"/>
</dbReference>
<dbReference type="GO" id="GO:0008984">
    <property type="term" value="F:protein-glutamate methylesterase activity"/>
    <property type="evidence" value="ECO:0007669"/>
    <property type="project" value="UniProtKB-UniRule"/>
</dbReference>
<dbReference type="GO" id="GO:0050568">
    <property type="term" value="F:protein-glutamine glutaminase activity"/>
    <property type="evidence" value="ECO:0007669"/>
    <property type="project" value="UniProtKB-UniRule"/>
</dbReference>
<dbReference type="GO" id="GO:0006935">
    <property type="term" value="P:chemotaxis"/>
    <property type="evidence" value="ECO:0007669"/>
    <property type="project" value="UniProtKB-UniRule"/>
</dbReference>
<dbReference type="CDD" id="cd16432">
    <property type="entry name" value="CheB_Rec"/>
    <property type="match status" value="1"/>
</dbReference>
<dbReference type="CDD" id="cd17541">
    <property type="entry name" value="REC_CheB-like"/>
    <property type="match status" value="1"/>
</dbReference>
<dbReference type="Gene3D" id="3.40.50.2300">
    <property type="match status" value="1"/>
</dbReference>
<dbReference type="Gene3D" id="3.40.50.180">
    <property type="entry name" value="Methylesterase CheB, C-terminal domain"/>
    <property type="match status" value="1"/>
</dbReference>
<dbReference type="HAMAP" id="MF_00099">
    <property type="entry name" value="CheB_chemtxs"/>
    <property type="match status" value="1"/>
</dbReference>
<dbReference type="InterPro" id="IPR008248">
    <property type="entry name" value="CheB-like"/>
</dbReference>
<dbReference type="InterPro" id="IPR035909">
    <property type="entry name" value="CheB_C"/>
</dbReference>
<dbReference type="InterPro" id="IPR011006">
    <property type="entry name" value="CheY-like_superfamily"/>
</dbReference>
<dbReference type="InterPro" id="IPR000673">
    <property type="entry name" value="Sig_transdc_resp-reg_Me-estase"/>
</dbReference>
<dbReference type="InterPro" id="IPR001789">
    <property type="entry name" value="Sig_transdc_resp-reg_receiver"/>
</dbReference>
<dbReference type="NCBIfam" id="NF001965">
    <property type="entry name" value="PRK00742.1"/>
    <property type="match status" value="1"/>
</dbReference>
<dbReference type="NCBIfam" id="NF009206">
    <property type="entry name" value="PRK12555.1"/>
    <property type="match status" value="1"/>
</dbReference>
<dbReference type="PANTHER" id="PTHR42872">
    <property type="entry name" value="PROTEIN-GLUTAMATE METHYLESTERASE/PROTEIN-GLUTAMINE GLUTAMINASE"/>
    <property type="match status" value="1"/>
</dbReference>
<dbReference type="PANTHER" id="PTHR42872:SF6">
    <property type="entry name" value="PROTEIN-GLUTAMATE METHYLESTERASE_PROTEIN-GLUTAMINE GLUTAMINASE"/>
    <property type="match status" value="1"/>
</dbReference>
<dbReference type="Pfam" id="PF01339">
    <property type="entry name" value="CheB_methylest"/>
    <property type="match status" value="1"/>
</dbReference>
<dbReference type="Pfam" id="PF00072">
    <property type="entry name" value="Response_reg"/>
    <property type="match status" value="1"/>
</dbReference>
<dbReference type="PIRSF" id="PIRSF000876">
    <property type="entry name" value="RR_chemtxs_CheB"/>
    <property type="match status" value="1"/>
</dbReference>
<dbReference type="SMART" id="SM00448">
    <property type="entry name" value="REC"/>
    <property type="match status" value="1"/>
</dbReference>
<dbReference type="SUPFAM" id="SSF52172">
    <property type="entry name" value="CheY-like"/>
    <property type="match status" value="1"/>
</dbReference>
<dbReference type="SUPFAM" id="SSF52738">
    <property type="entry name" value="Methylesterase CheB, C-terminal domain"/>
    <property type="match status" value="1"/>
</dbReference>
<dbReference type="PROSITE" id="PS50122">
    <property type="entry name" value="CHEB"/>
    <property type="match status" value="1"/>
</dbReference>
<dbReference type="PROSITE" id="PS50110">
    <property type="entry name" value="RESPONSE_REGULATORY"/>
    <property type="match status" value="1"/>
</dbReference>
<comment type="function">
    <text evidence="1">Involved in chemotaxis. Part of a chemotaxis signal transduction system that modulates chemotaxis in response to various stimuli. Catalyzes the demethylation of specific methylglutamate residues introduced into the chemoreceptors (methyl-accepting chemotaxis proteins or MCP) by CheR. Also mediates the irreversible deamidation of specific glutamine residues to glutamic acid.</text>
</comment>
<comment type="catalytic activity">
    <reaction evidence="1">
        <text>[protein]-L-glutamate 5-O-methyl ester + H2O = L-glutamyl-[protein] + methanol + H(+)</text>
        <dbReference type="Rhea" id="RHEA:23236"/>
        <dbReference type="Rhea" id="RHEA-COMP:10208"/>
        <dbReference type="Rhea" id="RHEA-COMP:10311"/>
        <dbReference type="ChEBI" id="CHEBI:15377"/>
        <dbReference type="ChEBI" id="CHEBI:15378"/>
        <dbReference type="ChEBI" id="CHEBI:17790"/>
        <dbReference type="ChEBI" id="CHEBI:29973"/>
        <dbReference type="ChEBI" id="CHEBI:82795"/>
        <dbReference type="EC" id="3.1.1.61"/>
    </reaction>
</comment>
<comment type="catalytic activity">
    <reaction evidence="1">
        <text>L-glutaminyl-[protein] + H2O = L-glutamyl-[protein] + NH4(+)</text>
        <dbReference type="Rhea" id="RHEA:16441"/>
        <dbReference type="Rhea" id="RHEA-COMP:10207"/>
        <dbReference type="Rhea" id="RHEA-COMP:10208"/>
        <dbReference type="ChEBI" id="CHEBI:15377"/>
        <dbReference type="ChEBI" id="CHEBI:28938"/>
        <dbReference type="ChEBI" id="CHEBI:29973"/>
        <dbReference type="ChEBI" id="CHEBI:30011"/>
        <dbReference type="EC" id="3.5.1.44"/>
    </reaction>
</comment>
<comment type="subcellular location">
    <subcellularLocation>
        <location evidence="1">Cytoplasm</location>
    </subcellularLocation>
</comment>
<comment type="domain">
    <text evidence="1">Contains a C-terminal catalytic domain, and an N-terminal region which modulates catalytic activity.</text>
</comment>
<comment type="PTM">
    <text evidence="1">Phosphorylated by CheA. Phosphorylation of the N-terminal regulatory domain activates the methylesterase activity.</text>
</comment>
<comment type="similarity">
    <text evidence="1">Belongs to the CheB family.</text>
</comment>
<protein>
    <recommendedName>
        <fullName evidence="1">Protein-glutamate methylesterase/protein-glutamine glutaminase 2</fullName>
        <ecNumber evidence="1">3.1.1.61</ecNumber>
        <ecNumber evidence="1">3.5.1.44</ecNumber>
    </recommendedName>
</protein>
<accession>Q8PX96</accession>
<name>CHEB2_METMA</name>
<feature type="chain" id="PRO_0000158054" description="Protein-glutamate methylesterase/protein-glutamine glutaminase 2">
    <location>
        <begin position="1"/>
        <end position="367"/>
    </location>
</feature>
<feature type="domain" description="Response regulatory" evidence="1">
    <location>
        <begin position="15"/>
        <end position="132"/>
    </location>
</feature>
<feature type="domain" description="CheB-type methylesterase" evidence="1">
    <location>
        <begin position="172"/>
        <end position="367"/>
    </location>
</feature>
<feature type="active site" evidence="1">
    <location>
        <position position="184"/>
    </location>
</feature>
<feature type="active site" evidence="1">
    <location>
        <position position="211"/>
    </location>
</feature>
<feature type="active site" evidence="1">
    <location>
        <position position="311"/>
    </location>
</feature>
<feature type="modified residue" description="4-aspartylphosphate" evidence="1">
    <location>
        <position position="66"/>
    </location>
</feature>
<keyword id="KW-0145">Chemotaxis</keyword>
<keyword id="KW-0963">Cytoplasm</keyword>
<keyword id="KW-0378">Hydrolase</keyword>
<keyword id="KW-0597">Phosphoprotein</keyword>
<reference key="1">
    <citation type="journal article" date="2002" name="J. Mol. Microbiol. Biotechnol.">
        <title>The genome of Methanosarcina mazei: evidence for lateral gene transfer between Bacteria and Archaea.</title>
        <authorList>
            <person name="Deppenmeier U."/>
            <person name="Johann A."/>
            <person name="Hartsch T."/>
            <person name="Merkl R."/>
            <person name="Schmitz R.A."/>
            <person name="Martinez-Arias R."/>
            <person name="Henne A."/>
            <person name="Wiezer A."/>
            <person name="Baeumer S."/>
            <person name="Jacobi C."/>
            <person name="Brueggemann H."/>
            <person name="Lienard T."/>
            <person name="Christmann A."/>
            <person name="Boemecke M."/>
            <person name="Steckel S."/>
            <person name="Bhattacharyya A."/>
            <person name="Lykidis A."/>
            <person name="Overbeek R."/>
            <person name="Klenk H.-P."/>
            <person name="Gunsalus R.P."/>
            <person name="Fritz H.-J."/>
            <person name="Gottschalk G."/>
        </authorList>
    </citation>
    <scope>NUCLEOTIDE SEQUENCE [LARGE SCALE GENOMIC DNA]</scope>
    <source>
        <strain>ATCC BAA-159 / DSM 3647 / Goe1 / Go1 / JCM 11833 / OCM 88</strain>
    </source>
</reference>
<sequence>MSNQHPKKVLEMVIRALIVDDSALIRKVLSDILNQDPKIAVIGTAINGEDGLEKVRKLKPDVVLLDNIMPVLDGLKTLSHIMEEFPTPVVIVSALGEKAEEITLTALEYGAVDVIEKPSGILSQSMHEMAEEICAKVRAVSKADLNNLGCIRDLEHQIPENHRKKKNSLREKTSVRNVLAIGASTGGPRALEKLIGSFPAEIPAAVLIVQHMPPGFTASLSKRLDAKSALRVKEAQEGDIMEEGTVFIAPGDYHMEIVRNKVNGFGEDTVHLSCGPKELGSRPSVNVLFRSVARIYGPRVISLVLTGMNCDGADGAEEIKKMGGKVIAEDQSSCVIYGMPGEIVRRNLADFVLPLDKMADEIVKIVR</sequence>
<gene>
    <name evidence="1" type="primary">cheB2</name>
    <name type="ordered locus">MM_1326</name>
</gene>